<name>VSP3_BOTJA</name>
<keyword id="KW-0903">Direct protein sequencing</keyword>
<keyword id="KW-1015">Disulfide bond</keyword>
<keyword id="KW-1206">Fibrinogenolytic toxin</keyword>
<keyword id="KW-0325">Glycoprotein</keyword>
<keyword id="KW-1199">Hemostasis impairing toxin</keyword>
<keyword id="KW-0378">Hydrolase</keyword>
<keyword id="KW-0645">Protease</keyword>
<keyword id="KW-0964">Secreted</keyword>
<keyword id="KW-0720">Serine protease</keyword>
<keyword id="KW-0732">Signal</keyword>
<keyword id="KW-0800">Toxin</keyword>
<keyword id="KW-0865">Zymogen</keyword>
<organism>
    <name type="scientific">Bothrops jararaca</name>
    <name type="common">Jararaca</name>
    <name type="synonym">Bothrops jajaraca</name>
    <dbReference type="NCBI Taxonomy" id="8724"/>
    <lineage>
        <taxon>Eukaryota</taxon>
        <taxon>Metazoa</taxon>
        <taxon>Chordata</taxon>
        <taxon>Craniata</taxon>
        <taxon>Vertebrata</taxon>
        <taxon>Euteleostomi</taxon>
        <taxon>Lepidosauria</taxon>
        <taxon>Squamata</taxon>
        <taxon>Bifurcata</taxon>
        <taxon>Unidentata</taxon>
        <taxon>Episquamata</taxon>
        <taxon>Toxicofera</taxon>
        <taxon>Serpentes</taxon>
        <taxon>Colubroidea</taxon>
        <taxon>Viperidae</taxon>
        <taxon>Crotalinae</taxon>
        <taxon>Bothrops</taxon>
    </lineage>
</organism>
<proteinExistence type="evidence at protein level"/>
<accession>Q9PTU8</accession>
<dbReference type="EC" id="3.4.21.-"/>
<dbReference type="EMBL" id="AB031394">
    <property type="protein sequence ID" value="BAA89310.1"/>
    <property type="molecule type" value="mRNA"/>
</dbReference>
<dbReference type="SMR" id="Q9PTU8"/>
<dbReference type="MEROPS" id="S01.433"/>
<dbReference type="GO" id="GO:0005576">
    <property type="term" value="C:extracellular region"/>
    <property type="evidence" value="ECO:0007669"/>
    <property type="project" value="UniProtKB-SubCell"/>
</dbReference>
<dbReference type="GO" id="GO:0030141">
    <property type="term" value="C:secretory granule"/>
    <property type="evidence" value="ECO:0007669"/>
    <property type="project" value="TreeGrafter"/>
</dbReference>
<dbReference type="GO" id="GO:0004252">
    <property type="term" value="F:serine-type endopeptidase activity"/>
    <property type="evidence" value="ECO:0007669"/>
    <property type="project" value="InterPro"/>
</dbReference>
<dbReference type="GO" id="GO:0090729">
    <property type="term" value="F:toxin activity"/>
    <property type="evidence" value="ECO:0007669"/>
    <property type="project" value="UniProtKB-KW"/>
</dbReference>
<dbReference type="GO" id="GO:0006508">
    <property type="term" value="P:proteolysis"/>
    <property type="evidence" value="ECO:0007669"/>
    <property type="project" value="UniProtKB-KW"/>
</dbReference>
<dbReference type="CDD" id="cd00190">
    <property type="entry name" value="Tryp_SPc"/>
    <property type="match status" value="1"/>
</dbReference>
<dbReference type="FunFam" id="2.40.10.10:FF:000158">
    <property type="entry name" value="Thrombin-like enzyme saxthrombin"/>
    <property type="match status" value="1"/>
</dbReference>
<dbReference type="Gene3D" id="2.40.10.10">
    <property type="entry name" value="Trypsin-like serine proteases"/>
    <property type="match status" value="2"/>
</dbReference>
<dbReference type="InterPro" id="IPR009003">
    <property type="entry name" value="Peptidase_S1_PA"/>
</dbReference>
<dbReference type="InterPro" id="IPR043504">
    <property type="entry name" value="Peptidase_S1_PA_chymotrypsin"/>
</dbReference>
<dbReference type="InterPro" id="IPR001314">
    <property type="entry name" value="Peptidase_S1A"/>
</dbReference>
<dbReference type="InterPro" id="IPR001254">
    <property type="entry name" value="Trypsin_dom"/>
</dbReference>
<dbReference type="InterPro" id="IPR018114">
    <property type="entry name" value="TRYPSIN_HIS"/>
</dbReference>
<dbReference type="InterPro" id="IPR033116">
    <property type="entry name" value="TRYPSIN_SER"/>
</dbReference>
<dbReference type="PANTHER" id="PTHR24271:SF47">
    <property type="entry name" value="KALLIKREIN-1"/>
    <property type="match status" value="1"/>
</dbReference>
<dbReference type="PANTHER" id="PTHR24271">
    <property type="entry name" value="KALLIKREIN-RELATED"/>
    <property type="match status" value="1"/>
</dbReference>
<dbReference type="Pfam" id="PF00089">
    <property type="entry name" value="Trypsin"/>
    <property type="match status" value="1"/>
</dbReference>
<dbReference type="PRINTS" id="PR00722">
    <property type="entry name" value="CHYMOTRYPSIN"/>
</dbReference>
<dbReference type="SMART" id="SM00020">
    <property type="entry name" value="Tryp_SPc"/>
    <property type="match status" value="1"/>
</dbReference>
<dbReference type="SUPFAM" id="SSF50494">
    <property type="entry name" value="Trypsin-like serine proteases"/>
    <property type="match status" value="1"/>
</dbReference>
<dbReference type="PROSITE" id="PS50240">
    <property type="entry name" value="TRYPSIN_DOM"/>
    <property type="match status" value="1"/>
</dbReference>
<dbReference type="PROSITE" id="PS00134">
    <property type="entry name" value="TRYPSIN_HIS"/>
    <property type="match status" value="1"/>
</dbReference>
<dbReference type="PROSITE" id="PS00135">
    <property type="entry name" value="TRYPSIN_SER"/>
    <property type="match status" value="1"/>
</dbReference>
<comment type="function">
    <text evidence="4 6">Snake venom serine protease that has a potent and selective fibrinogenolytic activity. Preferentially cleaves the alpha-chain (FGA) of human and rat fibrinogen at Arg-|-Gly bonds, and slowly digests the beta-chain (FGB) (PubMed:18433459). In vivo, completely avoids thrombus formation induced in rat, decreases the fibrinogen plasma level and prolonges the recalcification time. Possesses esterolytic and amidolytic activities.</text>
</comment>
<comment type="activity regulation">
    <text evidence="6">Inhibited by diisopropylfluorophosphate (DFP), but not by SBTI, Antithrombin III/heparin and BPTI, probably due to steric hindrance caused by its huge carbohydrate moietie.</text>
</comment>
<comment type="biophysicochemical properties">
    <kinetics>
        <KM evidence="5 6">0.94 mM for Bz-Arg-pNa (at pH 3)</KM>
        <KM evidence="5 6">0.9 mM for Bz-Arg-pNa (at pH 7.2)</KM>
        <KM evidence="5 6">0.95 mM for Bz-Arg-pNa (at pH 10)</KM>
        <KM evidence="5 6">0.29 mM for D-Phe-Pip-Arg-pNA</KM>
        <KM evidence="5 6">0.31 mM for D-Val-Leu-Arg-pNA</KM>
        <KM evidence="5 6">0.53 mM for Tos-Gly-Pro-Arg-pNA</KM>
        <KM evidence="5 6">0 mM for D-Val-Leu-Lys-pNA</KM>
        <Vmax evidence="5 6">0.76 umol/min/mg enzyme with Bz-Arg-pNa as substrate (at pH 3)</Vmax>
        <Vmax evidence="5 6">0.82 umol/min/mg enzyme with Bz-Arg-pNa as substrate (at pH 7.2)</Vmax>
        <Vmax evidence="5 6">0.75 umol/min/mg enzyme with Bz-Arg-pNa as substrate (at pH 10)</Vmax>
        <Vmax evidence="5 6">0.69 nmol/min/mg enzyme with D-Phe-Pip-Arg-pNA as substrate</Vmax>
        <Vmax evidence="5 6">0.134 nmol/min/mg enzyme with D-Val-Leu-Arg-pNA as substrate</Vmax>
        <Vmax evidence="5 6">0.044 nmol/min/mg enzyme with Tos-Gly-Pro-Arg-pNA as substrate</Vmax>
        <Vmax evidence="5 6">0.0 nmol/min/mg enzyme with D-Val-Leu-Lys-pNA as substrate</Vmax>
    </kinetics>
    <phDependence>
        <text evidence="5 6">Optimum pH is 3-9.</text>
    </phDependence>
    <temperatureDependence>
        <text evidence="5 6">Thermostable.</text>
    </temperatureDependence>
</comment>
<comment type="subunit">
    <text evidence="5">Monomer.</text>
</comment>
<comment type="subcellular location">
    <subcellularLocation>
        <location evidence="1">Secreted</location>
    </subcellularLocation>
</comment>
<comment type="tissue specificity">
    <text>Expressed by the venom gland.</text>
</comment>
<comment type="PTM">
    <text evidence="5 6">N- and O-glycosylated. The glycosylation has a stabilizing effect on the protein (PubMed:14580991). However, the removal of part of the carbohydrates enhances the proteolytic activity of the SVSP towards human and rat fibrinogen (PubMed:18433459).</text>
</comment>
<comment type="miscellaneous">
    <text evidence="7">Negative results: does not have coagulant activities and does not cause unspecific degradation of plasma proteins. Does not degrade gamma chain of fibrinogen (FGG) and is not active towards fibrin clots.</text>
</comment>
<comment type="similarity">
    <text evidence="3">Belongs to the peptidase S1 family. Snake venom subfamily.</text>
</comment>
<feature type="signal peptide" evidence="1">
    <location>
        <begin position="1"/>
        <end position="18"/>
    </location>
</feature>
<feature type="propeptide" id="PRO_0000028383" evidence="5">
    <location>
        <begin position="19"/>
        <end position="24"/>
    </location>
</feature>
<feature type="chain" id="PRO_0000028384" description="Snake venom serine protease BPA">
    <location>
        <begin position="25"/>
        <end position="258"/>
    </location>
</feature>
<feature type="domain" description="Peptidase S1" evidence="3">
    <location>
        <begin position="25"/>
        <end position="249"/>
    </location>
</feature>
<feature type="active site" description="Charge relay system" evidence="1">
    <location>
        <position position="65"/>
    </location>
</feature>
<feature type="active site" description="Charge relay system" evidence="1">
    <location>
        <position position="110"/>
    </location>
</feature>
<feature type="active site" description="Charge relay system" evidence="1">
    <location>
        <position position="204"/>
    </location>
</feature>
<feature type="glycosylation site" description="N-linked (GlcNAc...) asparagine" evidence="2">
    <location>
        <position position="32"/>
    </location>
</feature>
<feature type="glycosylation site" description="N-linked (GlcNAc...) asparagine" evidence="2">
    <location>
        <position position="44"/>
    </location>
</feature>
<feature type="glycosylation site" description="N-linked (GlcNAc...) asparagine" evidence="2">
    <location>
        <position position="103"/>
    </location>
</feature>
<feature type="glycosylation site" description="N-linked (GlcNAc...) asparagine" evidence="2">
    <location>
        <position position="121"/>
    </location>
</feature>
<feature type="glycosylation site" description="O-linked (GalNAc...) serine" evidence="2">
    <location>
        <position position="133"/>
    </location>
</feature>
<feature type="glycosylation site" description="N-linked (GlcNAc...) asparagine" evidence="2">
    <location>
        <position position="154"/>
    </location>
</feature>
<feature type="glycosylation site" description="N-linked (GlcNAc...) asparagine" evidence="2">
    <location>
        <position position="170"/>
    </location>
</feature>
<feature type="glycosylation site" description="N-linked (GlcNAc...) asparagine" evidence="2">
    <location>
        <position position="211"/>
    </location>
</feature>
<feature type="glycosylation site" description="N-linked (GlcNAc...) asparagine" evidence="2">
    <location>
        <position position="251"/>
    </location>
</feature>
<feature type="glycosylation site" description="O-linked (GalNAc...) threonine" evidence="2">
    <location>
        <position position="255"/>
    </location>
</feature>
<feature type="disulfide bond" evidence="3">
    <location>
        <begin position="31"/>
        <end position="163"/>
    </location>
</feature>
<feature type="disulfide bond" evidence="3">
    <location>
        <begin position="50"/>
        <end position="66"/>
    </location>
</feature>
<feature type="disulfide bond" evidence="3">
    <location>
        <begin position="98"/>
        <end position="256"/>
    </location>
</feature>
<feature type="disulfide bond" evidence="3">
    <location>
        <begin position="142"/>
        <end position="210"/>
    </location>
</feature>
<feature type="disulfide bond" evidence="3">
    <location>
        <begin position="174"/>
        <end position="189"/>
    </location>
</feature>
<feature type="disulfide bond" evidence="3">
    <location>
        <begin position="200"/>
        <end position="225"/>
    </location>
</feature>
<evidence type="ECO:0000250" key="1"/>
<evidence type="ECO:0000255" key="2"/>
<evidence type="ECO:0000255" key="3">
    <source>
        <dbReference type="PROSITE-ProRule" id="PRU00274"/>
    </source>
</evidence>
<evidence type="ECO:0000269" key="4">
    <source>
    </source>
</evidence>
<evidence type="ECO:0000269" key="5">
    <source>
    </source>
</evidence>
<evidence type="ECO:0000269" key="6">
    <source>
    </source>
</evidence>
<evidence type="ECO:0000305" key="7">
    <source>
    </source>
</evidence>
<protein>
    <recommendedName>
        <fullName>Snake venom serine protease BPA</fullName>
        <shortName>SVSP</shortName>
        <ecNumber>3.4.21.-</ecNumber>
    </recommendedName>
    <alternativeName>
        <fullName>Bothrops protease A</fullName>
        <shortName>BPA</shortName>
    </alternativeName>
</protein>
<reference key="1">
    <citation type="journal article" date="2003" name="Biochim. Biophys. Acta">
        <title>The unusual high molecular mass of Bothrops protease A, a trypsin-like serine peptidase from the venom of Bothrops jararaca, is due to its high carbohydrate content.</title>
        <authorList>
            <person name="Murayama N."/>
            <person name="Saguchi K."/>
            <person name="Mentele R."/>
            <person name="Assakura M.T."/>
            <person name="Ohi H."/>
            <person name="Fujita Y."/>
            <person name="Camargo A.C."/>
            <person name="Higuchi S."/>
            <person name="Serrano S.M."/>
        </authorList>
    </citation>
    <scope>NUCLEOTIDE SEQUENCE [MRNA]</scope>
    <scope>PROTEIN SEQUENCE OF 25-57; 109-120 AND 236-248</scope>
    <scope>BIOPHYSICOCHEMICAL PROPERTIES</scope>
    <scope>SUBUNIT</scope>
    <source>
        <tissue>Venom</tissue>
        <tissue>Venom gland</tissue>
    </source>
</reference>
<reference key="2">
    <citation type="journal article" date="1964" name="Arch. Biochem. Biophys.">
        <title>Purification and properties of Bothrops protease A.</title>
        <authorList>
            <person name="Mandelbaum F.R."/>
            <person name="Henriques O.B."/>
        </authorList>
    </citation>
    <scope>FUNCTION</scope>
    <source>
        <tissue>Venom</tissue>
    </source>
</reference>
<reference key="3">
    <citation type="journal article" date="2008" name="J. Thromb. Haemost.">
        <title>Bothrops protease A, a unique highly glycosylated serine proteinase, is a potent, specific fibrinogenolytic agent.</title>
        <authorList>
            <person name="Paes Leme A.F."/>
            <person name="Prezoto B.C."/>
            <person name="Yamashiro E.T."/>
            <person name="Bertholim L."/>
            <person name="Tashima A.K."/>
            <person name="Klitzke C.F."/>
            <person name="Camargo A.C.M."/>
            <person name="Serrano S.M.T."/>
        </authorList>
    </citation>
    <scope>FUNCTION</scope>
    <scope>CATALYTIC ACTIVITY</scope>
    <scope>ACTIVITY REGULATION</scope>
    <scope>BIOPHYSICOCHEMICAL PROPERTIES</scope>
</reference>
<sequence>MVLIRVIANLLILQLSNAQKSSELVIGGDECNITEHRFLVEIFNSSGLFCGGTLIDQEWVLSAAHCDMRNMRIYLGVHNEGVQHADQQRRFAREKFFCLSSRNYTKWDKDIMLIRLNRPVNNSEHIAPLSLPSNPPSVGSVCRIMGWGTITSPNATFPDVPHCANINLFNYTVCRGAHAGLPATSRTLCAGVLQGGIDTCGGDSGGPLICNGTFQGIVSWGGHPCAQPGEPALYTKVFDYLPWIQSIIAGNTTATCPP</sequence>